<dbReference type="EMBL" id="L33895">
    <property type="protein sequence ID" value="AAA66952.1"/>
    <property type="molecule type" value="Genomic_RNA"/>
</dbReference>
<dbReference type="EMBL" id="EF672612">
    <property type="protein sequence ID" value="ABV53292.1"/>
    <property type="molecule type" value="Genomic_RNA"/>
</dbReference>
<dbReference type="PIR" id="H28839">
    <property type="entry name" value="VPXRWT"/>
</dbReference>
<dbReference type="SMR" id="P11200"/>
<dbReference type="Proteomes" id="UP000007048">
    <property type="component" value="Genome"/>
</dbReference>
<dbReference type="GO" id="GO:0044172">
    <property type="term" value="C:host cell endoplasmic reticulum-Golgi intermediate compartment"/>
    <property type="evidence" value="ECO:0007669"/>
    <property type="project" value="UniProtKB-SubCell"/>
</dbReference>
<dbReference type="GO" id="GO:0020002">
    <property type="term" value="C:host cell plasma membrane"/>
    <property type="evidence" value="ECO:0007669"/>
    <property type="project" value="UniProtKB-SubCell"/>
</dbReference>
<dbReference type="GO" id="GO:0044168">
    <property type="term" value="C:host cell rough endoplasmic reticulum"/>
    <property type="evidence" value="ECO:0007669"/>
    <property type="project" value="UniProtKB-SubCell"/>
</dbReference>
<dbReference type="GO" id="GO:0044163">
    <property type="term" value="C:host cytoskeleton"/>
    <property type="evidence" value="ECO:0007669"/>
    <property type="project" value="UniProtKB-SubCell"/>
</dbReference>
<dbReference type="GO" id="GO:0016020">
    <property type="term" value="C:membrane"/>
    <property type="evidence" value="ECO:0007669"/>
    <property type="project" value="UniProtKB-KW"/>
</dbReference>
<dbReference type="GO" id="GO:0039624">
    <property type="term" value="C:viral outer capsid"/>
    <property type="evidence" value="ECO:0007669"/>
    <property type="project" value="UniProtKB-UniRule"/>
</dbReference>
<dbReference type="GO" id="GO:0039665">
    <property type="term" value="P:permeabilization of host organelle membrane involved in viral entry into host cell"/>
    <property type="evidence" value="ECO:0007669"/>
    <property type="project" value="UniProtKB-UniRule"/>
</dbReference>
<dbReference type="GO" id="GO:0019062">
    <property type="term" value="P:virion attachment to host cell"/>
    <property type="evidence" value="ECO:0007669"/>
    <property type="project" value="UniProtKB-UniRule"/>
</dbReference>
<dbReference type="Gene3D" id="1.20.5.170">
    <property type="match status" value="1"/>
</dbReference>
<dbReference type="Gene3D" id="2.60.120.200">
    <property type="match status" value="1"/>
</dbReference>
<dbReference type="HAMAP" id="MF_04132">
    <property type="entry name" value="Rota_A_VP4"/>
    <property type="match status" value="1"/>
</dbReference>
<dbReference type="HAMAP" id="MF_04125">
    <property type="entry name" value="Rota_VP4"/>
    <property type="match status" value="1"/>
</dbReference>
<dbReference type="InterPro" id="IPR013320">
    <property type="entry name" value="ConA-like_dom_sf"/>
</dbReference>
<dbReference type="InterPro" id="IPR042546">
    <property type="entry name" value="Rota_A_VP4"/>
</dbReference>
<dbReference type="InterPro" id="IPR035330">
    <property type="entry name" value="Rota_VP4_MID"/>
</dbReference>
<dbReference type="InterPro" id="IPR038017">
    <property type="entry name" value="Rota_VP4_MID_sf"/>
</dbReference>
<dbReference type="InterPro" id="IPR000416">
    <property type="entry name" value="VP4_concanavalin-like"/>
</dbReference>
<dbReference type="InterPro" id="IPR035329">
    <property type="entry name" value="VP4_helical"/>
</dbReference>
<dbReference type="Pfam" id="PF17477">
    <property type="entry name" value="Rota_VP4_MID"/>
    <property type="match status" value="1"/>
</dbReference>
<dbReference type="Pfam" id="PF00426">
    <property type="entry name" value="VP4_haemagglut"/>
    <property type="match status" value="1"/>
</dbReference>
<dbReference type="Pfam" id="PF17478">
    <property type="entry name" value="VP4_helical"/>
    <property type="match status" value="1"/>
</dbReference>
<dbReference type="SUPFAM" id="SSF49899">
    <property type="entry name" value="Concanavalin A-like lectins/glucanases"/>
    <property type="match status" value="1"/>
</dbReference>
<dbReference type="SUPFAM" id="SSF111379">
    <property type="entry name" value="VP4 membrane interaction domain"/>
    <property type="match status" value="1"/>
</dbReference>
<accession>P11200</accession>
<accession>B3SRW7</accession>
<accession>Q86201</accession>
<proteinExistence type="inferred from homology"/>
<feature type="chain" id="PRO_0000368146" description="Outer capsid protein VP4" evidence="1">
    <location>
        <begin position="1"/>
        <end position="775"/>
    </location>
</feature>
<feature type="chain" id="PRO_0000041082" description="Outer capsid protein VP8*" evidence="1">
    <location>
        <begin position="1"/>
        <end position="230"/>
    </location>
</feature>
<feature type="chain" id="PRO_0000041083" description="Outer capsid protein VP5*" evidence="1">
    <location>
        <begin position="247"/>
        <end position="775"/>
    </location>
</feature>
<feature type="region of interest" description="Spike head" evidence="1">
    <location>
        <begin position="65"/>
        <end position="223"/>
    </location>
</feature>
<feature type="region of interest" description="Spike body and stalk (antigen domain)" evidence="1">
    <location>
        <begin position="247"/>
        <end position="478"/>
    </location>
</feature>
<feature type="region of interest" description="Hydrophobic; possible role in virus entry into host cell" evidence="1">
    <location>
        <begin position="388"/>
        <end position="408"/>
    </location>
</feature>
<feature type="region of interest" description="Spike foot" evidence="1">
    <location>
        <begin position="509"/>
        <end position="775"/>
    </location>
</feature>
<feature type="coiled-coil region" evidence="1">
    <location>
        <begin position="483"/>
        <end position="510"/>
    </location>
</feature>
<feature type="short sequence motif" description="DGE motif; interaction with ITGA2/ITGB1 heterodimer" evidence="1">
    <location>
        <begin position="307"/>
        <end position="309"/>
    </location>
</feature>
<feature type="short sequence motif" description="YGL motif; interaction with ITGA4" evidence="1">
    <location>
        <begin position="447"/>
        <end position="449"/>
    </location>
</feature>
<feature type="short sequence motif" description="KID motif; interaction with HSPA8" evidence="1">
    <location>
        <begin position="643"/>
        <end position="645"/>
    </location>
</feature>
<feature type="site" description="Cleavage" evidence="1">
    <location>
        <begin position="230"/>
        <end position="231"/>
    </location>
</feature>
<feature type="site" description="Cleavage" evidence="1">
    <location>
        <begin position="240"/>
        <end position="241"/>
    </location>
</feature>
<feature type="site" description="Cleavage; associated with enhancement of infectivity" evidence="1">
    <location>
        <begin position="246"/>
        <end position="247"/>
    </location>
</feature>
<feature type="disulfide bond" evidence="1">
    <location>
        <begin position="317"/>
        <end position="379"/>
    </location>
</feature>
<feature type="sequence conflict" description="In Ref. 1 and 4." evidence="3" ref="1 4">
    <original>TWSHG</original>
    <variation>VLESW</variation>
    <location>
        <begin position="49"/>
        <end position="53"/>
    </location>
</feature>
<feature type="sequence conflict" description="In Ref. 2; AAA66952." evidence="3" ref="2">
    <original>Q</original>
    <variation>R</variation>
    <location>
        <position position="70"/>
    </location>
</feature>
<feature type="sequence conflict" description="In Ref. 1 and 4." evidence="3" ref="1 4">
    <original>I</original>
    <variation>V</variation>
    <location>
        <position position="130"/>
    </location>
</feature>
<feature type="sequence conflict" description="In Ref. 1 and 4." evidence="3" ref="1 4">
    <original>N</original>
    <variation>S</variation>
    <location>
        <position position="146"/>
    </location>
</feature>
<feature type="sequence conflict" description="In Ref. 1 and 4." evidence="3" ref="1 4">
    <original>T</original>
    <variation>S</variation>
    <location>
        <position position="175"/>
    </location>
</feature>
<feature type="sequence conflict" description="In Ref. 3; ABV53292." evidence="3" ref="3">
    <original>T</original>
    <variation>A</variation>
    <location>
        <position position="190"/>
    </location>
</feature>
<feature type="sequence conflict" description="In Ref. 1 and 4." evidence="3" ref="1 4">
    <original>S</original>
    <variation>N</variation>
    <location>
        <position position="250"/>
    </location>
</feature>
<feature type="sequence conflict" description="In Ref. 3; ABV53292." evidence="3" ref="3">
    <original>T</original>
    <variation>I</variation>
    <location>
        <position position="316"/>
    </location>
</feature>
<feature type="sequence conflict" description="In Ref. 2; AAA66952." evidence="3" ref="2">
    <original>L</original>
    <variation>S</variation>
    <location>
        <position position="331"/>
    </location>
</feature>
<feature type="sequence conflict" description="In Ref. 3; ABV53292." evidence="3" ref="3">
    <original>H</original>
    <variation>D</variation>
    <location>
        <position position="335"/>
    </location>
</feature>
<feature type="sequence conflict" description="In Ref. 1." evidence="3" ref="1">
    <original>I</original>
    <variation>V</variation>
    <location>
        <position position="338"/>
    </location>
</feature>
<feature type="sequence conflict" description="In Ref. 1." evidence="3" ref="1">
    <original>D</original>
    <variation>N</variation>
    <location>
        <position position="353"/>
    </location>
</feature>
<feature type="sequence conflict" description="In Ref. 1." evidence="3" ref="1">
    <original>F</original>
    <variation>L</variation>
    <location>
        <position position="361"/>
    </location>
</feature>
<feature type="sequence conflict" description="In Ref. 1." evidence="3" ref="1">
    <original>M</original>
    <variation>L</variation>
    <location>
        <position position="388"/>
    </location>
</feature>
<feature type="sequence conflict" description="In Ref. 1." evidence="3" ref="1">
    <original>Q</original>
    <variation>K</variation>
    <location>
        <position position="413"/>
    </location>
</feature>
<feature type="sequence conflict" description="In Ref. 2; AAA66952." evidence="3" ref="2">
    <original>P</original>
    <variation>L</variation>
    <location>
        <position position="474"/>
    </location>
</feature>
<feature type="sequence conflict" description="In Ref. 1." evidence="3" ref="1">
    <original>G</original>
    <variation>R</variation>
    <location>
        <position position="565"/>
    </location>
</feature>
<feature type="sequence conflict" description="In Ref. 2 and 3; ABV53292." evidence="3" ref="2 3">
    <original>E</original>
    <variation>V</variation>
    <location>
        <position position="589"/>
    </location>
</feature>
<feature type="sequence conflict" description="In Ref. 1." evidence="3" ref="1">
    <location>
        <position position="614"/>
    </location>
</feature>
<feature type="sequence conflict" description="In Ref. 1." evidence="3" ref="1">
    <original>D</original>
    <variation>I</variation>
    <location>
        <position position="632"/>
    </location>
</feature>
<feature type="sequence conflict" description="In Ref. 3; ABV53292." evidence="3" ref="3">
    <original>N</original>
    <variation>T</variation>
    <location>
        <position position="732"/>
    </location>
</feature>
<organismHost>
    <name type="scientific">Homo sapiens</name>
    <name type="common">Human</name>
    <dbReference type="NCBI Taxonomy" id="9606"/>
</organismHost>
<name>VP4_ROTHT</name>
<comment type="function">
    <molecule>Outer capsid protein VP4</molecule>
    <text evidence="1">Spike-forming protein that mediates virion attachment to the host epithelial cell receptors and plays a major role in cell penetration, determination of host range restriction and virulence. Rotavirus attachment and entry into the host cell probably involves multiple sequential contacts between the outer capsid proteins VP4 and VP7, and the cell receptors. It is subsequently lost, together with VP7, following virus entry into the host cell. Following entry into the host cell, low intracellular or intravesicular Ca(2+) concentration probably causes the calcium-stabilized VP7 trimers to dissociate from the virion. This step is probably necessary for the membrane-disrupting entry step and the release of VP4, which is locked onto the virion by VP7. During the virus exit from the host cell, VP4 seems to be required to target the newly formed virions to the host cell lipid rafts.</text>
</comment>
<comment type="function">
    <molecule>Outer capsid protein VP5*</molecule>
    <text evidence="1">Forms the spike 'foot' and 'body' and acts as a membrane permeabilization protein that mediates release of viral particles from endosomal compartments into the cytoplasm. During entry, the part of VP5* that protrudes from the virus folds back on itself and reorganizes from a local dimer to a trimer. This reorganization may be linked to membrane penetration by exposing VP5* hydrophobic region. In integrin-dependent strains, VP5* targets the integrin heterodimer ITGA2/ITGB1 for cell attachment.</text>
</comment>
<comment type="function">
    <molecule>Outer capsid protein VP8*</molecule>
    <text evidence="1">Forms the head of the spikes and mediates the recognition of specific host cell surface glycans. It is the viral hemagglutinin and an important target of neutralizing antibodies. In sialic acid-dependent strains, VP8* binds to host cell sialic acid, most probably a ganglioside, providing the initial contact. In some other strains, VP8* mediates the attachment to histo-blood group antigens (HBGAs) for viral entry.</text>
</comment>
<comment type="subunit">
    <molecule>Outer capsid protein VP4</molecule>
    <text evidence="1">Homotrimer. VP4 adopts a dimeric appearance above the capsid surface, while forming a trimeric base anchored inside the capsid layer. Only hints of the third molecule are observed above the capsid surface. It probably performs a series of molecular rearrangements during viral entry. Prior to trypsin cleavage, it is flexible. The priming trypsin cleavage triggers its rearrangement into rigid spikes with approximate two-fold symmetry of their protruding parts. After an unknown second triggering event, cleaved VP4 may undergo another rearrangement, in which two VP5* subunits fold back on themselves and join a third subunit to form a tightly associated trimer, shaped like a folded umbrella. Interacts with VP6. Interacts with VP7.</text>
</comment>
<comment type="subunit">
    <molecule>Outer capsid protein VP5*</molecule>
    <text evidence="1">Homotrimer. The trimer is coiled-coil stabilized by its C-terminus, however, its N-terminus, known as antigen domain or 'body', seems to be flexible allowing it to self-associate either as a dimer or a trimer.</text>
</comment>
<comment type="subcellular location">
    <molecule>Outer capsid protein VP4</molecule>
    <subcellularLocation>
        <location evidence="1">Virion</location>
    </subcellularLocation>
    <subcellularLocation>
        <location evidence="1">Host rough endoplasmic reticulum</location>
    </subcellularLocation>
    <subcellularLocation>
        <location evidence="1">Host cell membrane</location>
    </subcellularLocation>
    <subcellularLocation>
        <location evidence="1">Host cytoplasm</location>
        <location evidence="1">Host cytoskeleton</location>
    </subcellularLocation>
    <subcellularLocation>
        <location evidence="1">Host endoplasmic reticulum-Golgi intermediate compartment</location>
    </subcellularLocation>
    <text evidence="1">The outer layer contains 180 copies of VP4, grouped as 60 dimers. Immature double-layered particles assembled in the cytoplasm bud across the membrane of the endoplasmic reticulum, acquiring during this process a transient lipid membrane that is modified with the ER resident viral glycoproteins NSP4 and VP7; these enveloped particles also contain VP4. As the particles move towards the interior of the ER cisternae, the transient lipid membrane and the non-structural protein NSP4 are lost, while the virus surface proteins VP4 and VP7 rearrange to form the outermost virus protein layer, yielding mature infectious triple-layered particles. VP4 also seems to associate with lipid rafts of the host cell membrane probably for the exit of the virus from the infected cell by an alternate pathway.</text>
</comment>
<comment type="subcellular location">
    <molecule>Outer capsid protein VP8*</molecule>
    <subcellularLocation>
        <location evidence="1">Virion</location>
    </subcellularLocation>
    <text evidence="1">Outer capsid protein.</text>
</comment>
<comment type="subcellular location">
    <molecule>Outer capsid protein VP5*</molecule>
    <subcellularLocation>
        <location evidence="1">Virion</location>
    </subcellularLocation>
    <text evidence="1">Outer capsid protein.</text>
</comment>
<comment type="domain">
    <molecule>Outer capsid protein VP4</molecule>
    <text evidence="1">The VP4 spike is divided into a foot, a stalk and body, and a head.</text>
</comment>
<comment type="PTM">
    <molecule>Outer capsid protein VP4</molecule>
    <text evidence="1">Proteolytic cleavage by trypsin results in activation of VP4 functions and greatly increases infectivity. The penetration into the host cell is dependent on trypsin treatment of VP4. It produces two peptides, VP5* and VP8* that remain associated with the virion. Cleavage of VP4 by trypsin probably occurs in vivo in the lumen of the intestine prior to infection of enterocytes. Trypsin seems to be incorporated into the three-layered viral particles but remains inactive as long as the viral outer capsid is intact and would only be activated upon the solubilization of the latter.</text>
</comment>
<comment type="miscellaneous">
    <text evidence="2">This strain probably does not use sialic acid to attach to the host cell.</text>
</comment>
<comment type="miscellaneous">
    <text evidence="1">In group A rotaviruses, VP4 defines the P serotype.</text>
</comment>
<comment type="miscellaneous">
    <text evidence="1">Some rotavirus strains are neuraminidase-sensitive and require sialic acid to attach to the cell surface. Some rotavirus strains are integrin-dependent. Some rotavirus strains depend on ganglioside for their entry into the host cell. Hsp70 also seems to be involved in the entry of some strains.</text>
</comment>
<comment type="similarity">
    <text evidence="1">Belongs to the rotavirus VP4 family.</text>
</comment>
<evidence type="ECO:0000255" key="1">
    <source>
        <dbReference type="HAMAP-Rule" id="MF_04132"/>
    </source>
</evidence>
<evidence type="ECO:0000303" key="2">
    <source>
    </source>
</evidence>
<evidence type="ECO:0000305" key="3"/>
<organism>
    <name type="scientific">Rotavirus A (strain RVA/Human/United Kingdom/ST3/1975/G4P2A[6])</name>
    <name type="common">RV-A</name>
    <name type="synonym">Rotavirus A (strain St. Thomas 3)</name>
    <dbReference type="NCBI Taxonomy" id="10960"/>
    <lineage>
        <taxon>Viruses</taxon>
        <taxon>Riboviria</taxon>
        <taxon>Orthornavirae</taxon>
        <taxon>Duplornaviricota</taxon>
        <taxon>Resentoviricetes</taxon>
        <taxon>Reovirales</taxon>
        <taxon>Sedoreoviridae</taxon>
        <taxon>Rotavirus</taxon>
        <taxon>Rotavirus A</taxon>
    </lineage>
</organism>
<reference key="1">
    <citation type="journal article" date="1988" name="J. Virol.">
        <title>Sequence of the fourth gene of human rotaviruses recovered from asymptomatic or symptomatic infections.</title>
        <authorList>
            <person name="Gorziglia M."/>
            <person name="Green K.Y."/>
            <person name="Nishikawa K."/>
            <person name="Taniguchi K."/>
            <person name="Jones R.W."/>
            <person name="Kapikian A.Z."/>
            <person name="Chanock R.M."/>
        </authorList>
    </citation>
    <scope>NUCLEOTIDE SEQUENCE [GENOMIC RNA]</scope>
</reference>
<reference key="2">
    <citation type="journal article" date="1995" name="Virology">
        <title>Identification of two independent neutralization domains on the VP4 trypsin cleavage products VP5* and VP8* of human rotavirus ST3.</title>
        <authorList>
            <person name="Padilla-Noriega L."/>
            <person name="Dunn S.J."/>
            <person name="Lopez S."/>
            <person name="Greenberg H.B."/>
            <person name="Arias C.F."/>
        </authorList>
    </citation>
    <scope>NUCLEOTIDE SEQUENCE [GENOMIC RNA]</scope>
</reference>
<reference key="3">
    <citation type="journal article" date="2008" name="J. Virol.">
        <title>Group A human rotavirus genomics: evidence that gene constellations are influenced by viral protein interactions.</title>
        <authorList>
            <person name="Heiman E.M."/>
            <person name="McDonald S.M."/>
            <person name="Barro M."/>
            <person name="Taraporewala Z.F."/>
            <person name="Bar-Magen T."/>
            <person name="Patton J.T."/>
        </authorList>
    </citation>
    <scope>NUCLEOTIDE SEQUENCE [GENOMIC RNA]</scope>
</reference>
<reference key="4">
    <citation type="journal article" date="1986" name="Proc. Natl. Acad. Sci. U.S.A.">
        <title>Conservation of amino acid sequence of VP8 and cleavage region of 84-kDa outer capsid protein among rotaviruses recovered from asymptomatic neonatal infection.</title>
        <authorList>
            <person name="Gorziglia M."/>
            <person name="Hoshino Y."/>
            <person name="Buckler-White A."/>
            <person name="Blumentals I."/>
            <person name="Glass R."/>
            <person name="Flores J."/>
            <person name="Kapikian A.Z."/>
            <person name="Chanock R.M."/>
        </authorList>
    </citation>
    <scope>NUCLEOTIDE SEQUENCE [GENOMIC RNA] OF 1-280</scope>
</reference>
<reference key="5">
    <citation type="journal article" date="2006" name="Glycoconj. J.">
        <title>Role of sialic acids in rotavirus infection.</title>
        <authorList>
            <person name="Isa P."/>
            <person name="Arias C.F."/>
            <person name="Lopez S."/>
        </authorList>
    </citation>
    <scope>REVIEW</scope>
</reference>
<sequence length="775" mass="87487">MASLIYRQLLTNSYTVELSDEINTIGSEKSQNITINPGPFAQTNYAPVTWSHGEVNDSTTIEPVLDGPYQPTSFKPPSDYWILLNPTNQQVVLEGTNKTDIWIALLLVEPNVTNQSRQYTLFGETKQITIENNTNKWKFFEMFRSNVSSEFQHKRTLTSDTKLAGFLKHYNSVWTFHGETPHATTDYSSTSNLSEVETTIHVEFYIISRSQESKCVEYINTGLPPMQNTRNIVPVALSSRSVTYQRAQVSEDIIISKTSLWKEMQYNRDIIIRFKFNNSIIKLGGLGYKWSEISFKAANYQYNYLRDGEQVTAHTTCSVNGVNNFSYNGGLLPTHFSISRYEVIKENSYVYVDYWDDSQAFRNMVYVRSLAANLNSVKCSGGNYNFQMPVGAWPVMSGGAVSLHFAGVTLSTQFTDFVSLNSLRFRFSLTVEEPPFSILRTRVSGLYGLPASNPNSGHEYYEIAGRFSLISLVPSNDDYQTPIMNSITVRQDLERQLGDLREEFNSLSQEIAITQLIDLALLPLDMFSMFSGIKSTIDAAKSMATKVMKKFKRSGLATSISELTGSLSNAASSVSRSSSIRSNISSISEWTDVSEQIAGSSDSVRNISTQTSAISRRLRLREITTQTEGMNDIDISAAVLKTKIDRSTHIRPDTLPDIITESSEKFIPKRAYRVLKDDEVMEADVDGKFFAYKVDTFEEVPFDVDKFVDLVTDSPVISAIIDFKTLKNLNDNYGITRSQALDLIRSDPRVLRDFINQNNPIIKNRIEQLILQCRL</sequence>
<keyword id="KW-0167">Capsid protein</keyword>
<keyword id="KW-0175">Coiled coil</keyword>
<keyword id="KW-1015">Disulfide bond</keyword>
<keyword id="KW-0348">Hemagglutinin</keyword>
<keyword id="KW-1032">Host cell membrane</keyword>
<keyword id="KW-1035">Host cytoplasm</keyword>
<keyword id="KW-1037">Host cytoskeleton</keyword>
<keyword id="KW-1038">Host endoplasmic reticulum</keyword>
<keyword id="KW-1043">Host membrane</keyword>
<keyword id="KW-0945">Host-virus interaction</keyword>
<keyword id="KW-0472">Membrane</keyword>
<keyword id="KW-1152">Outer capsid protein</keyword>
<keyword id="KW-1161">Viral attachment to host cell</keyword>
<keyword id="KW-1162">Viral penetration into host cytoplasm</keyword>
<keyword id="KW-1173">Viral penetration via permeabilization of host membrane</keyword>
<keyword id="KW-0946">Virion</keyword>
<keyword id="KW-1160">Virus entry into host cell</keyword>
<protein>
    <recommendedName>
        <fullName evidence="1">Outer capsid protein VP4</fullName>
    </recommendedName>
    <alternativeName>
        <fullName evidence="1">Hemagglutinin</fullName>
    </alternativeName>
    <component>
        <recommendedName>
            <fullName evidence="1">Outer capsid protein VP8*</fullName>
        </recommendedName>
    </component>
    <component>
        <recommendedName>
            <fullName evidence="1">Outer capsid protein VP5*</fullName>
        </recommendedName>
    </component>
</protein>